<reference key="1">
    <citation type="submission" date="2007-02" db="EMBL/GenBank/DDBJ databases">
        <title>Complete sequence of chromosome of Shewanella baltica OS155.</title>
        <authorList>
            <consortium name="US DOE Joint Genome Institute"/>
            <person name="Copeland A."/>
            <person name="Lucas S."/>
            <person name="Lapidus A."/>
            <person name="Barry K."/>
            <person name="Detter J.C."/>
            <person name="Glavina del Rio T."/>
            <person name="Hammon N."/>
            <person name="Israni S."/>
            <person name="Dalin E."/>
            <person name="Tice H."/>
            <person name="Pitluck S."/>
            <person name="Sims D.R."/>
            <person name="Brettin T."/>
            <person name="Bruce D."/>
            <person name="Han C."/>
            <person name="Tapia R."/>
            <person name="Brainard J."/>
            <person name="Schmutz J."/>
            <person name="Larimer F."/>
            <person name="Land M."/>
            <person name="Hauser L."/>
            <person name="Kyrpides N."/>
            <person name="Mikhailova N."/>
            <person name="Brettar I."/>
            <person name="Klappenbach J."/>
            <person name="Konstantinidis K."/>
            <person name="Rodrigues J."/>
            <person name="Tiedje J."/>
            <person name="Richardson P."/>
        </authorList>
    </citation>
    <scope>NUCLEOTIDE SEQUENCE [LARGE SCALE GENOMIC DNA]</scope>
    <source>
        <strain>OS155 / ATCC BAA-1091</strain>
    </source>
</reference>
<protein>
    <recommendedName>
        <fullName evidence="1">Threonine--tRNA ligase</fullName>
        <ecNumber evidence="1">6.1.1.3</ecNumber>
    </recommendedName>
    <alternativeName>
        <fullName evidence="1">Threonyl-tRNA synthetase</fullName>
        <shortName evidence="1">ThrRS</shortName>
    </alternativeName>
</protein>
<keyword id="KW-0030">Aminoacyl-tRNA synthetase</keyword>
<keyword id="KW-0067">ATP-binding</keyword>
<keyword id="KW-0963">Cytoplasm</keyword>
<keyword id="KW-0436">Ligase</keyword>
<keyword id="KW-0479">Metal-binding</keyword>
<keyword id="KW-0547">Nucleotide-binding</keyword>
<keyword id="KW-0648">Protein biosynthesis</keyword>
<keyword id="KW-1185">Reference proteome</keyword>
<keyword id="KW-0694">RNA-binding</keyword>
<keyword id="KW-0820">tRNA-binding</keyword>
<keyword id="KW-0862">Zinc</keyword>
<sequence length="642" mass="73746">MPVITLPDGSKREFAHAVSTLDVAADIGPGLAKACIAGRVNGELKDACDLIETDAELSIITAKDEEGVEILRHSCAHLLGHAIKQMWPETKMAIGPVIDNGFYYDIDLEHKLTQDDIDALEKRMLQLAKTNYDVVKRVVSWQEARDTFAARGEDYKIAILDENISKDATPALYHHEEYTDMCRGPHVPNMRFCQHFKLMSIAGAYWRGNSENKMLQRIYGTAWADKKALSTHLTRLEEAAKRDHRKIGKQLDLYHMQEEAPGMVFWHNDGWSIFLELERFIRRKLNQYTYQEVKGPLMMDRVLWERSGHWDKYSEAMFTTSSENREYAIKPMNCPGHVQIFNQGLKSYRDLPLRMAEFGCCHRNEPSGSLHGLMRVRGFTQDDAHIFCTDSQVQEEVSACIQMVYDTYATFGFENIVVKLSTRPEKRIGDDAMWDRAEEALKQALRDNNIEFTILPGEGAFYGPKIEFTLHDCLDRAWQCGTVQLDYALPSRLGATYVAEDNSRQTPVMIHRAILGSLERFLGILIEEYAGRFPTWLAPMQVVVMNITDKQADYVEEVVKFFKEQGIRASFDLRNEKIGFKIREHTLRRVPYLLVVGDQEMENKEVAVRTRDGIDLGKMRLEDFATKIHQQISLRSLKLLEE</sequence>
<evidence type="ECO:0000255" key="1">
    <source>
        <dbReference type="HAMAP-Rule" id="MF_00184"/>
    </source>
</evidence>
<evidence type="ECO:0000255" key="2">
    <source>
        <dbReference type="PROSITE-ProRule" id="PRU01228"/>
    </source>
</evidence>
<accession>A3D4I2</accession>
<dbReference type="EC" id="6.1.1.3" evidence="1"/>
<dbReference type="EMBL" id="CP000563">
    <property type="protein sequence ID" value="ABN61645.1"/>
    <property type="molecule type" value="Genomic_DNA"/>
</dbReference>
<dbReference type="RefSeq" id="WP_011846833.1">
    <property type="nucleotide sequence ID" value="NC_009052.1"/>
</dbReference>
<dbReference type="SMR" id="A3D4I2"/>
<dbReference type="STRING" id="325240.Sbal_2148"/>
<dbReference type="KEGG" id="sbl:Sbal_2148"/>
<dbReference type="HOGENOM" id="CLU_008554_0_1_6"/>
<dbReference type="OrthoDB" id="9802304at2"/>
<dbReference type="Proteomes" id="UP000001557">
    <property type="component" value="Chromosome"/>
</dbReference>
<dbReference type="GO" id="GO:0005829">
    <property type="term" value="C:cytosol"/>
    <property type="evidence" value="ECO:0007669"/>
    <property type="project" value="TreeGrafter"/>
</dbReference>
<dbReference type="GO" id="GO:0005524">
    <property type="term" value="F:ATP binding"/>
    <property type="evidence" value="ECO:0007669"/>
    <property type="project" value="UniProtKB-UniRule"/>
</dbReference>
<dbReference type="GO" id="GO:0046872">
    <property type="term" value="F:metal ion binding"/>
    <property type="evidence" value="ECO:0007669"/>
    <property type="project" value="UniProtKB-KW"/>
</dbReference>
<dbReference type="GO" id="GO:0004829">
    <property type="term" value="F:threonine-tRNA ligase activity"/>
    <property type="evidence" value="ECO:0007669"/>
    <property type="project" value="UniProtKB-UniRule"/>
</dbReference>
<dbReference type="GO" id="GO:0000049">
    <property type="term" value="F:tRNA binding"/>
    <property type="evidence" value="ECO:0007669"/>
    <property type="project" value="UniProtKB-KW"/>
</dbReference>
<dbReference type="GO" id="GO:0006435">
    <property type="term" value="P:threonyl-tRNA aminoacylation"/>
    <property type="evidence" value="ECO:0007669"/>
    <property type="project" value="UniProtKB-UniRule"/>
</dbReference>
<dbReference type="CDD" id="cd01667">
    <property type="entry name" value="TGS_ThrRS"/>
    <property type="match status" value="1"/>
</dbReference>
<dbReference type="CDD" id="cd00860">
    <property type="entry name" value="ThrRS_anticodon"/>
    <property type="match status" value="1"/>
</dbReference>
<dbReference type="CDD" id="cd00771">
    <property type="entry name" value="ThrRS_core"/>
    <property type="match status" value="1"/>
</dbReference>
<dbReference type="FunFam" id="3.10.20.30:FF:000005">
    <property type="entry name" value="Threonine--tRNA ligase"/>
    <property type="match status" value="1"/>
</dbReference>
<dbReference type="FunFam" id="3.30.54.20:FF:000002">
    <property type="entry name" value="Threonine--tRNA ligase"/>
    <property type="match status" value="1"/>
</dbReference>
<dbReference type="FunFam" id="3.30.930.10:FF:000002">
    <property type="entry name" value="Threonine--tRNA ligase"/>
    <property type="match status" value="1"/>
</dbReference>
<dbReference type="FunFam" id="3.40.50.800:FF:000001">
    <property type="entry name" value="Threonine--tRNA ligase"/>
    <property type="match status" value="1"/>
</dbReference>
<dbReference type="FunFam" id="3.30.980.10:FF:000005">
    <property type="entry name" value="Threonyl-tRNA synthetase, mitochondrial"/>
    <property type="match status" value="1"/>
</dbReference>
<dbReference type="Gene3D" id="3.10.20.30">
    <property type="match status" value="1"/>
</dbReference>
<dbReference type="Gene3D" id="3.30.54.20">
    <property type="match status" value="1"/>
</dbReference>
<dbReference type="Gene3D" id="3.40.50.800">
    <property type="entry name" value="Anticodon-binding domain"/>
    <property type="match status" value="1"/>
</dbReference>
<dbReference type="Gene3D" id="3.30.930.10">
    <property type="entry name" value="Bira Bifunctional Protein, Domain 2"/>
    <property type="match status" value="1"/>
</dbReference>
<dbReference type="Gene3D" id="3.30.980.10">
    <property type="entry name" value="Threonyl-trna Synthetase, Chain A, domain 2"/>
    <property type="match status" value="1"/>
</dbReference>
<dbReference type="HAMAP" id="MF_00184">
    <property type="entry name" value="Thr_tRNA_synth"/>
    <property type="match status" value="1"/>
</dbReference>
<dbReference type="InterPro" id="IPR002314">
    <property type="entry name" value="aa-tRNA-synt_IIb"/>
</dbReference>
<dbReference type="InterPro" id="IPR006195">
    <property type="entry name" value="aa-tRNA-synth_II"/>
</dbReference>
<dbReference type="InterPro" id="IPR045864">
    <property type="entry name" value="aa-tRNA-synth_II/BPL/LPL"/>
</dbReference>
<dbReference type="InterPro" id="IPR004154">
    <property type="entry name" value="Anticodon-bd"/>
</dbReference>
<dbReference type="InterPro" id="IPR036621">
    <property type="entry name" value="Anticodon-bd_dom_sf"/>
</dbReference>
<dbReference type="InterPro" id="IPR012675">
    <property type="entry name" value="Beta-grasp_dom_sf"/>
</dbReference>
<dbReference type="InterPro" id="IPR004095">
    <property type="entry name" value="TGS"/>
</dbReference>
<dbReference type="InterPro" id="IPR012676">
    <property type="entry name" value="TGS-like"/>
</dbReference>
<dbReference type="InterPro" id="IPR002320">
    <property type="entry name" value="Thr-tRNA-ligase_IIa"/>
</dbReference>
<dbReference type="InterPro" id="IPR018163">
    <property type="entry name" value="Thr/Ala-tRNA-synth_IIc_edit"/>
</dbReference>
<dbReference type="InterPro" id="IPR047246">
    <property type="entry name" value="ThrRS_anticodon"/>
</dbReference>
<dbReference type="InterPro" id="IPR033728">
    <property type="entry name" value="ThrRS_core"/>
</dbReference>
<dbReference type="InterPro" id="IPR012947">
    <property type="entry name" value="tRNA_SAD"/>
</dbReference>
<dbReference type="NCBIfam" id="TIGR00418">
    <property type="entry name" value="thrS"/>
    <property type="match status" value="1"/>
</dbReference>
<dbReference type="PANTHER" id="PTHR11451:SF44">
    <property type="entry name" value="THREONINE--TRNA LIGASE, CHLOROPLASTIC_MITOCHONDRIAL 2"/>
    <property type="match status" value="1"/>
</dbReference>
<dbReference type="PANTHER" id="PTHR11451">
    <property type="entry name" value="THREONINE-TRNA LIGASE"/>
    <property type="match status" value="1"/>
</dbReference>
<dbReference type="Pfam" id="PF03129">
    <property type="entry name" value="HGTP_anticodon"/>
    <property type="match status" value="1"/>
</dbReference>
<dbReference type="Pfam" id="PF02824">
    <property type="entry name" value="TGS"/>
    <property type="match status" value="1"/>
</dbReference>
<dbReference type="Pfam" id="PF00587">
    <property type="entry name" value="tRNA-synt_2b"/>
    <property type="match status" value="1"/>
</dbReference>
<dbReference type="Pfam" id="PF07973">
    <property type="entry name" value="tRNA_SAD"/>
    <property type="match status" value="1"/>
</dbReference>
<dbReference type="PRINTS" id="PR01047">
    <property type="entry name" value="TRNASYNTHTHR"/>
</dbReference>
<dbReference type="SMART" id="SM00863">
    <property type="entry name" value="tRNA_SAD"/>
    <property type="match status" value="1"/>
</dbReference>
<dbReference type="SUPFAM" id="SSF52954">
    <property type="entry name" value="Class II aaRS ABD-related"/>
    <property type="match status" value="1"/>
</dbReference>
<dbReference type="SUPFAM" id="SSF55681">
    <property type="entry name" value="Class II aaRS and biotin synthetases"/>
    <property type="match status" value="1"/>
</dbReference>
<dbReference type="SUPFAM" id="SSF81271">
    <property type="entry name" value="TGS-like"/>
    <property type="match status" value="1"/>
</dbReference>
<dbReference type="SUPFAM" id="SSF55186">
    <property type="entry name" value="ThrRS/AlaRS common domain"/>
    <property type="match status" value="1"/>
</dbReference>
<dbReference type="PROSITE" id="PS50862">
    <property type="entry name" value="AA_TRNA_LIGASE_II"/>
    <property type="match status" value="1"/>
</dbReference>
<dbReference type="PROSITE" id="PS51880">
    <property type="entry name" value="TGS"/>
    <property type="match status" value="1"/>
</dbReference>
<gene>
    <name evidence="1" type="primary">thrS</name>
    <name type="ordered locus">Sbal_2148</name>
</gene>
<comment type="function">
    <text evidence="1">Catalyzes the attachment of threonine to tRNA(Thr) in a two-step reaction: L-threonine is first activated by ATP to form Thr-AMP and then transferred to the acceptor end of tRNA(Thr). Also edits incorrectly charged L-seryl-tRNA(Thr).</text>
</comment>
<comment type="catalytic activity">
    <reaction evidence="1">
        <text>tRNA(Thr) + L-threonine + ATP = L-threonyl-tRNA(Thr) + AMP + diphosphate + H(+)</text>
        <dbReference type="Rhea" id="RHEA:24624"/>
        <dbReference type="Rhea" id="RHEA-COMP:9670"/>
        <dbReference type="Rhea" id="RHEA-COMP:9704"/>
        <dbReference type="ChEBI" id="CHEBI:15378"/>
        <dbReference type="ChEBI" id="CHEBI:30616"/>
        <dbReference type="ChEBI" id="CHEBI:33019"/>
        <dbReference type="ChEBI" id="CHEBI:57926"/>
        <dbReference type="ChEBI" id="CHEBI:78442"/>
        <dbReference type="ChEBI" id="CHEBI:78534"/>
        <dbReference type="ChEBI" id="CHEBI:456215"/>
        <dbReference type="EC" id="6.1.1.3"/>
    </reaction>
</comment>
<comment type="cofactor">
    <cofactor evidence="1">
        <name>Zn(2+)</name>
        <dbReference type="ChEBI" id="CHEBI:29105"/>
    </cofactor>
    <text evidence="1">Binds 1 zinc ion per subunit.</text>
</comment>
<comment type="subunit">
    <text evidence="1">Homodimer.</text>
</comment>
<comment type="subcellular location">
    <subcellularLocation>
        <location evidence="1">Cytoplasm</location>
    </subcellularLocation>
</comment>
<comment type="similarity">
    <text evidence="1">Belongs to the class-II aminoacyl-tRNA synthetase family.</text>
</comment>
<organism>
    <name type="scientific">Shewanella baltica (strain OS155 / ATCC BAA-1091)</name>
    <dbReference type="NCBI Taxonomy" id="325240"/>
    <lineage>
        <taxon>Bacteria</taxon>
        <taxon>Pseudomonadati</taxon>
        <taxon>Pseudomonadota</taxon>
        <taxon>Gammaproteobacteria</taxon>
        <taxon>Alteromonadales</taxon>
        <taxon>Shewanellaceae</taxon>
        <taxon>Shewanella</taxon>
    </lineage>
</organism>
<feature type="chain" id="PRO_1000020501" description="Threonine--tRNA ligase">
    <location>
        <begin position="1"/>
        <end position="642"/>
    </location>
</feature>
<feature type="domain" description="TGS" evidence="2">
    <location>
        <begin position="1"/>
        <end position="61"/>
    </location>
</feature>
<feature type="region of interest" description="Catalytic" evidence="1">
    <location>
        <begin position="243"/>
        <end position="534"/>
    </location>
</feature>
<feature type="binding site" evidence="1">
    <location>
        <position position="334"/>
    </location>
    <ligand>
        <name>Zn(2+)</name>
        <dbReference type="ChEBI" id="CHEBI:29105"/>
    </ligand>
</feature>
<feature type="binding site" evidence="1">
    <location>
        <position position="385"/>
    </location>
    <ligand>
        <name>Zn(2+)</name>
        <dbReference type="ChEBI" id="CHEBI:29105"/>
    </ligand>
</feature>
<feature type="binding site" evidence="1">
    <location>
        <position position="511"/>
    </location>
    <ligand>
        <name>Zn(2+)</name>
        <dbReference type="ChEBI" id="CHEBI:29105"/>
    </ligand>
</feature>
<name>SYT_SHEB5</name>
<proteinExistence type="inferred from homology"/>